<gene>
    <name type="ordered locus">MT0499</name>
</gene>
<proteinExistence type="predicted"/>
<dbReference type="EMBL" id="AE000516">
    <property type="protein sequence ID" value="AAK44722.1"/>
    <property type="molecule type" value="Genomic_DNA"/>
</dbReference>
<dbReference type="PIR" id="D70743">
    <property type="entry name" value="D70743"/>
</dbReference>
<dbReference type="RefSeq" id="WP_003402351.1">
    <property type="nucleotide sequence ID" value="NZ_KK341227.1"/>
</dbReference>
<dbReference type="SMR" id="P9WKV4"/>
<dbReference type="KEGG" id="mtc:MT0499"/>
<dbReference type="PATRIC" id="fig|83331.31.peg.529"/>
<dbReference type="HOGENOM" id="CLU_104590_0_1_11"/>
<dbReference type="Proteomes" id="UP000001020">
    <property type="component" value="Chromosome"/>
</dbReference>
<dbReference type="Gene3D" id="3.30.530.20">
    <property type="match status" value="1"/>
</dbReference>
<dbReference type="InterPro" id="IPR019639">
    <property type="entry name" value="DUF2505"/>
</dbReference>
<dbReference type="InterPro" id="IPR023393">
    <property type="entry name" value="START-like_dom_sf"/>
</dbReference>
<dbReference type="Pfam" id="PF10698">
    <property type="entry name" value="DUF2505"/>
    <property type="match status" value="1"/>
</dbReference>
<feature type="chain" id="PRO_0000427588" description="Uncharacterized protein MT0499">
    <location>
        <begin position="1"/>
        <end position="174"/>
    </location>
</feature>
<organism>
    <name type="scientific">Mycobacterium tuberculosis (strain CDC 1551 / Oshkosh)</name>
    <dbReference type="NCBI Taxonomy" id="83331"/>
    <lineage>
        <taxon>Bacteria</taxon>
        <taxon>Bacillati</taxon>
        <taxon>Actinomycetota</taxon>
        <taxon>Actinomycetes</taxon>
        <taxon>Mycobacteriales</taxon>
        <taxon>Mycobacteriaceae</taxon>
        <taxon>Mycobacterium</taxon>
        <taxon>Mycobacterium tuberculosis complex</taxon>
    </lineage>
</organism>
<protein>
    <recommendedName>
        <fullName>Uncharacterized protein MT0499</fullName>
    </recommendedName>
</protein>
<accession>P9WKV4</accession>
<accession>L0T3Q9</accession>
<accession>P64701</accession>
<accession>Q11147</accession>
<name>Y481_MYCTO</name>
<reference key="1">
    <citation type="journal article" date="2002" name="J. Bacteriol.">
        <title>Whole-genome comparison of Mycobacterium tuberculosis clinical and laboratory strains.</title>
        <authorList>
            <person name="Fleischmann R.D."/>
            <person name="Alland D."/>
            <person name="Eisen J.A."/>
            <person name="Carpenter L."/>
            <person name="White O."/>
            <person name="Peterson J.D."/>
            <person name="DeBoy R.T."/>
            <person name="Dodson R.J."/>
            <person name="Gwinn M.L."/>
            <person name="Haft D.H."/>
            <person name="Hickey E.K."/>
            <person name="Kolonay J.F."/>
            <person name="Nelson W.C."/>
            <person name="Umayam L.A."/>
            <person name="Ermolaeva M.D."/>
            <person name="Salzberg S.L."/>
            <person name="Delcher A."/>
            <person name="Utterback T.R."/>
            <person name="Weidman J.F."/>
            <person name="Khouri H.M."/>
            <person name="Gill J."/>
            <person name="Mikula A."/>
            <person name="Bishai W."/>
            <person name="Jacobs W.R. Jr."/>
            <person name="Venter J.C."/>
            <person name="Fraser C.M."/>
        </authorList>
    </citation>
    <scope>NUCLEOTIDE SEQUENCE [LARGE SCALE GENOMIC DNA]</scope>
    <source>
        <strain>CDC 1551 / Oshkosh</strain>
    </source>
</reference>
<sequence length="174" mass="19064">MPRSFDMSADYEGSVEEVHRAFYEADYWKARLAETPVDVATLESIRVGGDSGDDGTIEVVTLQMVRSHNLPGLVTQLHRGDLSVRREETWGPVKEGIATASIAGSIVDAPVNLWGTAVLSPIPESGGSRMTLQVTIQVRIPFIGGKLERLIGTQLSQLVTIEQRFTTLWITNNV</sequence>
<keyword id="KW-1185">Reference proteome</keyword>